<comment type="function">
    <text evidence="1">mRNA decapping enzyme that specifically removes the nicotinamide adenine dinucleotide (NAD) cap from a subset of mRNAs by hydrolyzing the diphosphate linkage to produce nicotinamide mononucleotide (NMN) and 5' monophosphate mRNA. The NAD-cap is present at the 5'-end of some mRNAs and stabilizes RNA against 5'-processing. Has preference for mRNAs with a 5'-end purine. Catalyzes the hydrolysis of a broad range of dinucleotide pyrophosphates.</text>
</comment>
<comment type="catalytic activity">
    <reaction evidence="1">
        <text>a 5'-end NAD(+)-phospho-ribonucleoside in mRNA + H2O = a 5'-end phospho-adenosine-phospho-ribonucleoside in mRNA + beta-nicotinamide D-ribonucleotide + 2 H(+)</text>
        <dbReference type="Rhea" id="RHEA:60876"/>
        <dbReference type="Rhea" id="RHEA-COMP:15698"/>
        <dbReference type="Rhea" id="RHEA-COMP:15719"/>
        <dbReference type="ChEBI" id="CHEBI:14649"/>
        <dbReference type="ChEBI" id="CHEBI:15377"/>
        <dbReference type="ChEBI" id="CHEBI:15378"/>
        <dbReference type="ChEBI" id="CHEBI:144029"/>
        <dbReference type="ChEBI" id="CHEBI:144051"/>
    </reaction>
    <physiologicalReaction direction="left-to-right" evidence="1">
        <dbReference type="Rhea" id="RHEA:60877"/>
    </physiologicalReaction>
</comment>
<comment type="catalytic activity">
    <reaction evidence="1">
        <text>NAD(+) + H2O = beta-nicotinamide D-ribonucleotide + AMP + 2 H(+)</text>
        <dbReference type="Rhea" id="RHEA:11800"/>
        <dbReference type="ChEBI" id="CHEBI:14649"/>
        <dbReference type="ChEBI" id="CHEBI:15377"/>
        <dbReference type="ChEBI" id="CHEBI:15378"/>
        <dbReference type="ChEBI" id="CHEBI:57540"/>
        <dbReference type="ChEBI" id="CHEBI:456215"/>
        <dbReference type="EC" id="3.6.1.22"/>
    </reaction>
</comment>
<comment type="catalytic activity">
    <reaction evidence="1">
        <text>NADH + H2O = reduced beta-nicotinamide D-ribonucleotide + AMP + 2 H(+)</text>
        <dbReference type="Rhea" id="RHEA:48868"/>
        <dbReference type="ChEBI" id="CHEBI:15377"/>
        <dbReference type="ChEBI" id="CHEBI:15378"/>
        <dbReference type="ChEBI" id="CHEBI:57945"/>
        <dbReference type="ChEBI" id="CHEBI:90832"/>
        <dbReference type="ChEBI" id="CHEBI:456215"/>
        <dbReference type="EC" id="3.6.1.22"/>
    </reaction>
</comment>
<comment type="cofactor">
    <cofactor evidence="1">
        <name>Mg(2+)</name>
        <dbReference type="ChEBI" id="CHEBI:18420"/>
    </cofactor>
    <cofactor evidence="1">
        <name>Mn(2+)</name>
        <dbReference type="ChEBI" id="CHEBI:29035"/>
    </cofactor>
    <text evidence="1">Divalent metal cations. Mg(2+) or Mn(2+).</text>
</comment>
<comment type="cofactor">
    <cofactor evidence="1">
        <name>Zn(2+)</name>
        <dbReference type="ChEBI" id="CHEBI:29105"/>
    </cofactor>
    <text evidence="1">Binds 1 zinc ion per subunit.</text>
</comment>
<comment type="subunit">
    <text evidence="1">Homodimer.</text>
</comment>
<comment type="similarity">
    <text evidence="1">Belongs to the Nudix hydrolase family. NudC subfamily.</text>
</comment>
<dbReference type="EC" id="3.6.1.-" evidence="1"/>
<dbReference type="EC" id="3.6.1.22" evidence="1"/>
<dbReference type="EMBL" id="CP000247">
    <property type="protein sequence ID" value="ABG72160.1"/>
    <property type="molecule type" value="Genomic_DNA"/>
</dbReference>
<dbReference type="RefSeq" id="WP_000373936.1">
    <property type="nucleotide sequence ID" value="NC_008253.1"/>
</dbReference>
<dbReference type="SMR" id="Q0TA69"/>
<dbReference type="KEGG" id="ecp:ECP_4209"/>
<dbReference type="HOGENOM" id="CLU_037162_0_1_6"/>
<dbReference type="Proteomes" id="UP000009182">
    <property type="component" value="Chromosome"/>
</dbReference>
<dbReference type="GO" id="GO:0005829">
    <property type="term" value="C:cytosol"/>
    <property type="evidence" value="ECO:0007669"/>
    <property type="project" value="TreeGrafter"/>
</dbReference>
<dbReference type="GO" id="GO:0000287">
    <property type="term" value="F:magnesium ion binding"/>
    <property type="evidence" value="ECO:0007669"/>
    <property type="project" value="UniProtKB-UniRule"/>
</dbReference>
<dbReference type="GO" id="GO:0030145">
    <property type="term" value="F:manganese ion binding"/>
    <property type="evidence" value="ECO:0007669"/>
    <property type="project" value="UniProtKB-UniRule"/>
</dbReference>
<dbReference type="GO" id="GO:0000210">
    <property type="term" value="F:NAD+ diphosphatase activity"/>
    <property type="evidence" value="ECO:0007669"/>
    <property type="project" value="UniProtKB-UniRule"/>
</dbReference>
<dbReference type="GO" id="GO:0035529">
    <property type="term" value="F:NADH pyrophosphatase activity"/>
    <property type="evidence" value="ECO:0007669"/>
    <property type="project" value="TreeGrafter"/>
</dbReference>
<dbReference type="GO" id="GO:0110153">
    <property type="term" value="F:RNA NAD-cap (NMN-forming) hydrolase activity"/>
    <property type="evidence" value="ECO:0007669"/>
    <property type="project" value="RHEA"/>
</dbReference>
<dbReference type="GO" id="GO:0008270">
    <property type="term" value="F:zinc ion binding"/>
    <property type="evidence" value="ECO:0007669"/>
    <property type="project" value="UniProtKB-UniRule"/>
</dbReference>
<dbReference type="GO" id="GO:0019677">
    <property type="term" value="P:NAD catabolic process"/>
    <property type="evidence" value="ECO:0007669"/>
    <property type="project" value="TreeGrafter"/>
</dbReference>
<dbReference type="GO" id="GO:0006734">
    <property type="term" value="P:NADH metabolic process"/>
    <property type="evidence" value="ECO:0007669"/>
    <property type="project" value="TreeGrafter"/>
</dbReference>
<dbReference type="GO" id="GO:0006742">
    <property type="term" value="P:NADP catabolic process"/>
    <property type="evidence" value="ECO:0007669"/>
    <property type="project" value="TreeGrafter"/>
</dbReference>
<dbReference type="CDD" id="cd03429">
    <property type="entry name" value="NUDIX_NADH_pyrophosphatase_Nudt13"/>
    <property type="match status" value="1"/>
</dbReference>
<dbReference type="FunFam" id="3.90.79.10:FF:000004">
    <property type="entry name" value="NADH pyrophosphatase"/>
    <property type="match status" value="1"/>
</dbReference>
<dbReference type="FunFam" id="3.90.79.20:FF:000001">
    <property type="entry name" value="NADH pyrophosphatase"/>
    <property type="match status" value="1"/>
</dbReference>
<dbReference type="Gene3D" id="3.90.79.20">
    <property type="match status" value="1"/>
</dbReference>
<dbReference type="Gene3D" id="3.90.79.10">
    <property type="entry name" value="Nucleoside Triphosphate Pyrophosphohydrolase"/>
    <property type="match status" value="1"/>
</dbReference>
<dbReference type="HAMAP" id="MF_00297">
    <property type="entry name" value="Nudix_NudC"/>
    <property type="match status" value="1"/>
</dbReference>
<dbReference type="InterPro" id="IPR050241">
    <property type="entry name" value="NAD-cap_RNA_hydrolase_NudC"/>
</dbReference>
<dbReference type="InterPro" id="IPR049734">
    <property type="entry name" value="NudC-like_C"/>
</dbReference>
<dbReference type="InterPro" id="IPR015797">
    <property type="entry name" value="NUDIX_hydrolase-like_dom_sf"/>
</dbReference>
<dbReference type="InterPro" id="IPR020084">
    <property type="entry name" value="NUDIX_hydrolase_CS"/>
</dbReference>
<dbReference type="InterPro" id="IPR000086">
    <property type="entry name" value="NUDIX_hydrolase_dom"/>
</dbReference>
<dbReference type="InterPro" id="IPR022925">
    <property type="entry name" value="RNA_Hydrolase_NudC"/>
</dbReference>
<dbReference type="InterPro" id="IPR015376">
    <property type="entry name" value="Znr_NADH_PPase"/>
</dbReference>
<dbReference type="NCBIfam" id="NF001299">
    <property type="entry name" value="PRK00241.1"/>
    <property type="match status" value="1"/>
</dbReference>
<dbReference type="PANTHER" id="PTHR42904:SF6">
    <property type="entry name" value="NAD-CAPPED RNA HYDROLASE NUDT12"/>
    <property type="match status" value="1"/>
</dbReference>
<dbReference type="PANTHER" id="PTHR42904">
    <property type="entry name" value="NUDIX HYDROLASE, NUDC SUBFAMILY"/>
    <property type="match status" value="1"/>
</dbReference>
<dbReference type="Pfam" id="PF00293">
    <property type="entry name" value="NUDIX"/>
    <property type="match status" value="1"/>
</dbReference>
<dbReference type="Pfam" id="PF09297">
    <property type="entry name" value="Zn_ribbon_NUD"/>
    <property type="match status" value="1"/>
</dbReference>
<dbReference type="SUPFAM" id="SSF55811">
    <property type="entry name" value="Nudix"/>
    <property type="match status" value="2"/>
</dbReference>
<dbReference type="PROSITE" id="PS51462">
    <property type="entry name" value="NUDIX"/>
    <property type="match status" value="1"/>
</dbReference>
<dbReference type="PROSITE" id="PS00893">
    <property type="entry name" value="NUDIX_BOX"/>
    <property type="match status" value="1"/>
</dbReference>
<gene>
    <name evidence="1" type="primary">nudC</name>
    <name type="ordered locus">ECP_4209</name>
</gene>
<evidence type="ECO:0000255" key="1">
    <source>
        <dbReference type="HAMAP-Rule" id="MF_00297"/>
    </source>
</evidence>
<proteinExistence type="inferred from homology"/>
<accession>Q0TA69</accession>
<feature type="chain" id="PRO_1000021905" description="NAD-capped RNA hydrolase NudC">
    <location>
        <begin position="1"/>
        <end position="257"/>
    </location>
</feature>
<feature type="domain" description="Nudix hydrolase" evidence="1">
    <location>
        <begin position="125"/>
        <end position="248"/>
    </location>
</feature>
<feature type="short sequence motif" description="Nudix box" evidence="1">
    <location>
        <begin position="159"/>
        <end position="180"/>
    </location>
</feature>
<feature type="binding site" evidence="1">
    <location>
        <position position="25"/>
    </location>
    <ligand>
        <name>substrate</name>
    </ligand>
</feature>
<feature type="binding site" evidence="1">
    <location>
        <position position="69"/>
    </location>
    <ligand>
        <name>substrate</name>
    </ligand>
</feature>
<feature type="binding site" evidence="1">
    <location>
        <position position="98"/>
    </location>
    <ligand>
        <name>Zn(2+)</name>
        <dbReference type="ChEBI" id="CHEBI:29105"/>
    </ligand>
</feature>
<feature type="binding site" evidence="1">
    <location>
        <position position="101"/>
    </location>
    <ligand>
        <name>Zn(2+)</name>
        <dbReference type="ChEBI" id="CHEBI:29105"/>
    </ligand>
</feature>
<feature type="binding site" evidence="1">
    <location>
        <position position="111"/>
    </location>
    <ligand>
        <name>substrate</name>
    </ligand>
</feature>
<feature type="binding site" evidence="1">
    <location>
        <position position="116"/>
    </location>
    <ligand>
        <name>Zn(2+)</name>
        <dbReference type="ChEBI" id="CHEBI:29105"/>
    </ligand>
</feature>
<feature type="binding site" evidence="1">
    <location>
        <position position="119"/>
    </location>
    <ligand>
        <name>Zn(2+)</name>
        <dbReference type="ChEBI" id="CHEBI:29105"/>
    </ligand>
</feature>
<feature type="binding site" evidence="1">
    <location>
        <position position="124"/>
    </location>
    <ligand>
        <name>substrate</name>
    </ligand>
</feature>
<feature type="binding site" evidence="1">
    <location>
        <position position="158"/>
    </location>
    <ligand>
        <name>a divalent metal cation</name>
        <dbReference type="ChEBI" id="CHEBI:60240"/>
        <label>1</label>
    </ligand>
</feature>
<feature type="binding site" evidence="1">
    <location>
        <position position="174"/>
    </location>
    <ligand>
        <name>a divalent metal cation</name>
        <dbReference type="ChEBI" id="CHEBI:60240"/>
        <label>2</label>
    </ligand>
</feature>
<feature type="binding site" evidence="1">
    <location>
        <position position="174"/>
    </location>
    <ligand>
        <name>a divalent metal cation</name>
        <dbReference type="ChEBI" id="CHEBI:60240"/>
        <label>3</label>
    </ligand>
</feature>
<feature type="binding site" evidence="1">
    <location>
        <position position="178"/>
    </location>
    <ligand>
        <name>a divalent metal cation</name>
        <dbReference type="ChEBI" id="CHEBI:60240"/>
        <label>1</label>
    </ligand>
</feature>
<feature type="binding site" evidence="1">
    <location>
        <position position="178"/>
    </location>
    <ligand>
        <name>a divalent metal cation</name>
        <dbReference type="ChEBI" id="CHEBI:60240"/>
        <label>3</label>
    </ligand>
</feature>
<feature type="binding site" evidence="1">
    <location>
        <begin position="192"/>
        <end position="199"/>
    </location>
    <ligand>
        <name>substrate</name>
    </ligand>
</feature>
<feature type="binding site" evidence="1">
    <location>
        <position position="219"/>
    </location>
    <ligand>
        <name>a divalent metal cation</name>
        <dbReference type="ChEBI" id="CHEBI:60240"/>
        <label>1</label>
    </ligand>
</feature>
<feature type="binding site" evidence="1">
    <location>
        <position position="219"/>
    </location>
    <ligand>
        <name>a divalent metal cation</name>
        <dbReference type="ChEBI" id="CHEBI:60240"/>
        <label>3</label>
    </ligand>
</feature>
<feature type="binding site" evidence="1">
    <location>
        <position position="241"/>
    </location>
    <ligand>
        <name>substrate</name>
    </ligand>
</feature>
<protein>
    <recommendedName>
        <fullName evidence="1">NAD-capped RNA hydrolase NudC</fullName>
        <shortName evidence="1">DeNADding enzyme NudC</shortName>
        <ecNumber evidence="1">3.6.1.-</ecNumber>
    </recommendedName>
    <alternativeName>
        <fullName evidence="1">NADH pyrophosphatase</fullName>
        <ecNumber evidence="1">3.6.1.22</ecNumber>
    </alternativeName>
</protein>
<name>NUDC_ECOL5</name>
<keyword id="KW-0378">Hydrolase</keyword>
<keyword id="KW-0460">Magnesium</keyword>
<keyword id="KW-0464">Manganese</keyword>
<keyword id="KW-0479">Metal-binding</keyword>
<keyword id="KW-0520">NAD</keyword>
<keyword id="KW-0862">Zinc</keyword>
<organism>
    <name type="scientific">Escherichia coli O6:K15:H31 (strain 536 / UPEC)</name>
    <dbReference type="NCBI Taxonomy" id="362663"/>
    <lineage>
        <taxon>Bacteria</taxon>
        <taxon>Pseudomonadati</taxon>
        <taxon>Pseudomonadota</taxon>
        <taxon>Gammaproteobacteria</taxon>
        <taxon>Enterobacterales</taxon>
        <taxon>Enterobacteriaceae</taxon>
        <taxon>Escherichia</taxon>
    </lineage>
</organism>
<sequence>MDRIIEKLDHGWWVVSHEQKLWLPKGELPYGEAANFDLVGQRALQIGEWQGEPVWLVQLQRRHDMGSVRQVIDLDVGLFQLAGRGVQLAEFYRSHKYCGYCGHEMYPSKTEWAMLCSHCRERYYPQIAPCIIVAIRRDDSILLAQHTRHRNGVHTVLAGFVEVGETLEQAVAREVMEESGIKVKNLRYVTSQPWPFPQSLMTAFMAEYDSGEIVIDPKELLEANWYRYDDLPLLPPPGTVARRLIEDTVAMCRAEYE</sequence>
<reference key="1">
    <citation type="journal article" date="2006" name="Mol. Microbiol.">
        <title>Role of pathogenicity island-associated integrases in the genome plasticity of uropathogenic Escherichia coli strain 536.</title>
        <authorList>
            <person name="Hochhut B."/>
            <person name="Wilde C."/>
            <person name="Balling G."/>
            <person name="Middendorf B."/>
            <person name="Dobrindt U."/>
            <person name="Brzuszkiewicz E."/>
            <person name="Gottschalk G."/>
            <person name="Carniel E."/>
            <person name="Hacker J."/>
        </authorList>
    </citation>
    <scope>NUCLEOTIDE SEQUENCE [LARGE SCALE GENOMIC DNA]</scope>
    <source>
        <strain>536 / UPEC</strain>
    </source>
</reference>